<protein>
    <recommendedName>
        <fullName evidence="1">4-hydroxy-3-methylbut-2-enyl diphosphate reductase</fullName>
        <shortName evidence="1">HMBPP reductase</shortName>
        <ecNumber evidence="1">1.17.7.4</ecNumber>
    </recommendedName>
</protein>
<evidence type="ECO:0000255" key="1">
    <source>
        <dbReference type="HAMAP-Rule" id="MF_00191"/>
    </source>
</evidence>
<feature type="chain" id="PRO_1000204000" description="4-hydroxy-3-methylbut-2-enyl diphosphate reductase">
    <location>
        <begin position="1"/>
        <end position="286"/>
    </location>
</feature>
<feature type="active site" description="Proton donor" evidence="1">
    <location>
        <position position="131"/>
    </location>
</feature>
<feature type="binding site" evidence="1">
    <location>
        <position position="12"/>
    </location>
    <ligand>
        <name>[4Fe-4S] cluster</name>
        <dbReference type="ChEBI" id="CHEBI:49883"/>
    </ligand>
</feature>
<feature type="binding site" evidence="1">
    <location>
        <position position="46"/>
    </location>
    <ligand>
        <name>(2E)-4-hydroxy-3-methylbut-2-enyl diphosphate</name>
        <dbReference type="ChEBI" id="CHEBI:128753"/>
    </ligand>
</feature>
<feature type="binding site" evidence="1">
    <location>
        <position position="46"/>
    </location>
    <ligand>
        <name>dimethylallyl diphosphate</name>
        <dbReference type="ChEBI" id="CHEBI:57623"/>
    </ligand>
</feature>
<feature type="binding site" evidence="1">
    <location>
        <position position="46"/>
    </location>
    <ligand>
        <name>isopentenyl diphosphate</name>
        <dbReference type="ChEBI" id="CHEBI:128769"/>
    </ligand>
</feature>
<feature type="binding site" evidence="1">
    <location>
        <position position="79"/>
    </location>
    <ligand>
        <name>(2E)-4-hydroxy-3-methylbut-2-enyl diphosphate</name>
        <dbReference type="ChEBI" id="CHEBI:128753"/>
    </ligand>
</feature>
<feature type="binding site" evidence="1">
    <location>
        <position position="79"/>
    </location>
    <ligand>
        <name>dimethylallyl diphosphate</name>
        <dbReference type="ChEBI" id="CHEBI:57623"/>
    </ligand>
</feature>
<feature type="binding site" evidence="1">
    <location>
        <position position="79"/>
    </location>
    <ligand>
        <name>isopentenyl diphosphate</name>
        <dbReference type="ChEBI" id="CHEBI:128769"/>
    </ligand>
</feature>
<feature type="binding site" evidence="1">
    <location>
        <position position="101"/>
    </location>
    <ligand>
        <name>[4Fe-4S] cluster</name>
        <dbReference type="ChEBI" id="CHEBI:49883"/>
    </ligand>
</feature>
<feature type="binding site" evidence="1">
    <location>
        <position position="129"/>
    </location>
    <ligand>
        <name>(2E)-4-hydroxy-3-methylbut-2-enyl diphosphate</name>
        <dbReference type="ChEBI" id="CHEBI:128753"/>
    </ligand>
</feature>
<feature type="binding site" evidence="1">
    <location>
        <position position="129"/>
    </location>
    <ligand>
        <name>dimethylallyl diphosphate</name>
        <dbReference type="ChEBI" id="CHEBI:57623"/>
    </ligand>
</feature>
<feature type="binding site" evidence="1">
    <location>
        <position position="129"/>
    </location>
    <ligand>
        <name>isopentenyl diphosphate</name>
        <dbReference type="ChEBI" id="CHEBI:128769"/>
    </ligand>
</feature>
<feature type="binding site" evidence="1">
    <location>
        <position position="169"/>
    </location>
    <ligand>
        <name>(2E)-4-hydroxy-3-methylbut-2-enyl diphosphate</name>
        <dbReference type="ChEBI" id="CHEBI:128753"/>
    </ligand>
</feature>
<feature type="binding site" evidence="1">
    <location>
        <position position="198"/>
    </location>
    <ligand>
        <name>[4Fe-4S] cluster</name>
        <dbReference type="ChEBI" id="CHEBI:49883"/>
    </ligand>
</feature>
<feature type="binding site" evidence="1">
    <location>
        <position position="226"/>
    </location>
    <ligand>
        <name>(2E)-4-hydroxy-3-methylbut-2-enyl diphosphate</name>
        <dbReference type="ChEBI" id="CHEBI:128753"/>
    </ligand>
</feature>
<feature type="binding site" evidence="1">
    <location>
        <position position="226"/>
    </location>
    <ligand>
        <name>dimethylallyl diphosphate</name>
        <dbReference type="ChEBI" id="CHEBI:57623"/>
    </ligand>
</feature>
<feature type="binding site" evidence="1">
    <location>
        <position position="226"/>
    </location>
    <ligand>
        <name>isopentenyl diphosphate</name>
        <dbReference type="ChEBI" id="CHEBI:128769"/>
    </ligand>
</feature>
<feature type="binding site" evidence="1">
    <location>
        <position position="228"/>
    </location>
    <ligand>
        <name>(2E)-4-hydroxy-3-methylbut-2-enyl diphosphate</name>
        <dbReference type="ChEBI" id="CHEBI:128753"/>
    </ligand>
</feature>
<feature type="binding site" evidence="1">
    <location>
        <position position="228"/>
    </location>
    <ligand>
        <name>dimethylallyl diphosphate</name>
        <dbReference type="ChEBI" id="CHEBI:57623"/>
    </ligand>
</feature>
<feature type="binding site" evidence="1">
    <location>
        <position position="228"/>
    </location>
    <ligand>
        <name>isopentenyl diphosphate</name>
        <dbReference type="ChEBI" id="CHEBI:128769"/>
    </ligand>
</feature>
<feature type="binding site" evidence="1">
    <location>
        <position position="270"/>
    </location>
    <ligand>
        <name>(2E)-4-hydroxy-3-methylbut-2-enyl diphosphate</name>
        <dbReference type="ChEBI" id="CHEBI:128753"/>
    </ligand>
</feature>
<feature type="binding site" evidence="1">
    <location>
        <position position="270"/>
    </location>
    <ligand>
        <name>dimethylallyl diphosphate</name>
        <dbReference type="ChEBI" id="CHEBI:57623"/>
    </ligand>
</feature>
<feature type="binding site" evidence="1">
    <location>
        <position position="270"/>
    </location>
    <ligand>
        <name>isopentenyl diphosphate</name>
        <dbReference type="ChEBI" id="CHEBI:128769"/>
    </ligand>
</feature>
<proteinExistence type="inferred from homology"/>
<dbReference type="EC" id="1.17.7.4" evidence="1"/>
<dbReference type="EMBL" id="AP010904">
    <property type="protein sequence ID" value="BAH76154.1"/>
    <property type="molecule type" value="Genomic_DNA"/>
</dbReference>
<dbReference type="RefSeq" id="WP_015861328.1">
    <property type="nucleotide sequence ID" value="NC_012796.1"/>
</dbReference>
<dbReference type="SMR" id="C4XUD2"/>
<dbReference type="STRING" id="573370.DMR_26630"/>
<dbReference type="KEGG" id="dma:DMR_26630"/>
<dbReference type="eggNOG" id="COG0761">
    <property type="taxonomic scope" value="Bacteria"/>
</dbReference>
<dbReference type="HOGENOM" id="CLU_027486_0_1_7"/>
<dbReference type="OrthoDB" id="9804068at2"/>
<dbReference type="UniPathway" id="UPA00056">
    <property type="reaction ID" value="UER00097"/>
</dbReference>
<dbReference type="UniPathway" id="UPA00059">
    <property type="reaction ID" value="UER00105"/>
</dbReference>
<dbReference type="Proteomes" id="UP000009071">
    <property type="component" value="Chromosome"/>
</dbReference>
<dbReference type="GO" id="GO:0051539">
    <property type="term" value="F:4 iron, 4 sulfur cluster binding"/>
    <property type="evidence" value="ECO:0007669"/>
    <property type="project" value="UniProtKB-UniRule"/>
</dbReference>
<dbReference type="GO" id="GO:0051745">
    <property type="term" value="F:4-hydroxy-3-methylbut-2-enyl diphosphate reductase activity"/>
    <property type="evidence" value="ECO:0007669"/>
    <property type="project" value="UniProtKB-UniRule"/>
</dbReference>
<dbReference type="GO" id="GO:0046872">
    <property type="term" value="F:metal ion binding"/>
    <property type="evidence" value="ECO:0007669"/>
    <property type="project" value="UniProtKB-KW"/>
</dbReference>
<dbReference type="GO" id="GO:0050992">
    <property type="term" value="P:dimethylallyl diphosphate biosynthetic process"/>
    <property type="evidence" value="ECO:0007669"/>
    <property type="project" value="UniProtKB-UniRule"/>
</dbReference>
<dbReference type="GO" id="GO:0019288">
    <property type="term" value="P:isopentenyl diphosphate biosynthetic process, methylerythritol 4-phosphate pathway"/>
    <property type="evidence" value="ECO:0007669"/>
    <property type="project" value="UniProtKB-UniRule"/>
</dbReference>
<dbReference type="GO" id="GO:0016114">
    <property type="term" value="P:terpenoid biosynthetic process"/>
    <property type="evidence" value="ECO:0007669"/>
    <property type="project" value="UniProtKB-UniRule"/>
</dbReference>
<dbReference type="CDD" id="cd13944">
    <property type="entry name" value="lytB_ispH"/>
    <property type="match status" value="1"/>
</dbReference>
<dbReference type="Gene3D" id="3.40.50.11270">
    <property type="match status" value="1"/>
</dbReference>
<dbReference type="Gene3D" id="3.40.1010.20">
    <property type="entry name" value="4-hydroxy-3-methylbut-2-enyl diphosphate reductase, catalytic domain"/>
    <property type="match status" value="2"/>
</dbReference>
<dbReference type="HAMAP" id="MF_00191">
    <property type="entry name" value="IspH"/>
    <property type="match status" value="1"/>
</dbReference>
<dbReference type="InterPro" id="IPR003451">
    <property type="entry name" value="LytB/IspH"/>
</dbReference>
<dbReference type="NCBIfam" id="TIGR00216">
    <property type="entry name" value="ispH_lytB"/>
    <property type="match status" value="1"/>
</dbReference>
<dbReference type="PANTHER" id="PTHR30426">
    <property type="entry name" value="4-HYDROXY-3-METHYLBUT-2-ENYL DIPHOSPHATE REDUCTASE"/>
    <property type="match status" value="1"/>
</dbReference>
<dbReference type="PANTHER" id="PTHR30426:SF0">
    <property type="entry name" value="4-HYDROXY-3-METHYLBUT-2-ENYL DIPHOSPHATE REDUCTASE"/>
    <property type="match status" value="1"/>
</dbReference>
<dbReference type="Pfam" id="PF02401">
    <property type="entry name" value="LYTB"/>
    <property type="match status" value="1"/>
</dbReference>
<name>ISPH_SOLM1</name>
<gene>
    <name evidence="1" type="primary">ispH</name>
    <name type="ordered locus">DMR_26630</name>
</gene>
<organism>
    <name type="scientific">Solidesulfovibrio magneticus (strain ATCC 700980 / DSM 13731 / RS-1)</name>
    <name type="common">Desulfovibrio magneticus</name>
    <dbReference type="NCBI Taxonomy" id="573370"/>
    <lineage>
        <taxon>Bacteria</taxon>
        <taxon>Pseudomonadati</taxon>
        <taxon>Thermodesulfobacteriota</taxon>
        <taxon>Desulfovibrionia</taxon>
        <taxon>Desulfovibrionales</taxon>
        <taxon>Desulfovibrionaceae</taxon>
        <taxon>Solidesulfovibrio</taxon>
    </lineage>
</organism>
<sequence>MKLLRAQTAGFCMGVDLALKKLAALIDAPAKDAPAKAIVTFGPIIHNPQVLEDYAAKGVGVVNDPAAIAPGTTVVIRAHGIPDPVRRAIADRGAEIVDATCPKVKKAQTLIQAQAKQGRTLLLFGEEDHPEVKGLLSYATAGAHVFGDMEELEKLDLPHGPTYFLAAQTTQDEQEFLRIRDYLRNRFGAGLTVLSTICNATMNRQQEAMDLAAAVDFLVVVGGRDSGNTRRLAQVARSAGTPSVHIETADELSPGMFTGYATIGLTAGASTPKKIIDRVQQVLESY</sequence>
<accession>C4XUD2</accession>
<keyword id="KW-0004">4Fe-4S</keyword>
<keyword id="KW-0408">Iron</keyword>
<keyword id="KW-0411">Iron-sulfur</keyword>
<keyword id="KW-0414">Isoprene biosynthesis</keyword>
<keyword id="KW-0479">Metal-binding</keyword>
<keyword id="KW-0560">Oxidoreductase</keyword>
<comment type="function">
    <text evidence="1">Catalyzes the conversion of 1-hydroxy-2-methyl-2-(E)-butenyl 4-diphosphate (HMBPP) into a mixture of isopentenyl diphosphate (IPP) and dimethylallyl diphosphate (DMAPP). Acts in the terminal step of the DOXP/MEP pathway for isoprenoid precursor biosynthesis.</text>
</comment>
<comment type="catalytic activity">
    <reaction evidence="1">
        <text>isopentenyl diphosphate + 2 oxidized [2Fe-2S]-[ferredoxin] + H2O = (2E)-4-hydroxy-3-methylbut-2-enyl diphosphate + 2 reduced [2Fe-2S]-[ferredoxin] + 2 H(+)</text>
        <dbReference type="Rhea" id="RHEA:24488"/>
        <dbReference type="Rhea" id="RHEA-COMP:10000"/>
        <dbReference type="Rhea" id="RHEA-COMP:10001"/>
        <dbReference type="ChEBI" id="CHEBI:15377"/>
        <dbReference type="ChEBI" id="CHEBI:15378"/>
        <dbReference type="ChEBI" id="CHEBI:33737"/>
        <dbReference type="ChEBI" id="CHEBI:33738"/>
        <dbReference type="ChEBI" id="CHEBI:128753"/>
        <dbReference type="ChEBI" id="CHEBI:128769"/>
        <dbReference type="EC" id="1.17.7.4"/>
    </reaction>
</comment>
<comment type="catalytic activity">
    <reaction evidence="1">
        <text>dimethylallyl diphosphate + 2 oxidized [2Fe-2S]-[ferredoxin] + H2O = (2E)-4-hydroxy-3-methylbut-2-enyl diphosphate + 2 reduced [2Fe-2S]-[ferredoxin] + 2 H(+)</text>
        <dbReference type="Rhea" id="RHEA:24825"/>
        <dbReference type="Rhea" id="RHEA-COMP:10000"/>
        <dbReference type="Rhea" id="RHEA-COMP:10001"/>
        <dbReference type="ChEBI" id="CHEBI:15377"/>
        <dbReference type="ChEBI" id="CHEBI:15378"/>
        <dbReference type="ChEBI" id="CHEBI:33737"/>
        <dbReference type="ChEBI" id="CHEBI:33738"/>
        <dbReference type="ChEBI" id="CHEBI:57623"/>
        <dbReference type="ChEBI" id="CHEBI:128753"/>
        <dbReference type="EC" id="1.17.7.4"/>
    </reaction>
</comment>
<comment type="cofactor">
    <cofactor evidence="1">
        <name>[4Fe-4S] cluster</name>
        <dbReference type="ChEBI" id="CHEBI:49883"/>
    </cofactor>
    <text evidence="1">Binds 1 [4Fe-4S] cluster per subunit.</text>
</comment>
<comment type="pathway">
    <text evidence="1">Isoprenoid biosynthesis; dimethylallyl diphosphate biosynthesis; dimethylallyl diphosphate from (2E)-4-hydroxy-3-methylbutenyl diphosphate: step 1/1.</text>
</comment>
<comment type="pathway">
    <text evidence="1">Isoprenoid biosynthesis; isopentenyl diphosphate biosynthesis via DXP pathway; isopentenyl diphosphate from 1-deoxy-D-xylulose 5-phosphate: step 6/6.</text>
</comment>
<comment type="similarity">
    <text evidence="1">Belongs to the IspH family.</text>
</comment>
<reference key="1">
    <citation type="journal article" date="2009" name="Genome Res.">
        <title>Whole genome sequence of Desulfovibrio magneticus strain RS-1 revealed common gene clusters in magnetotactic bacteria.</title>
        <authorList>
            <person name="Nakazawa H."/>
            <person name="Arakaki A."/>
            <person name="Narita-Yamada S."/>
            <person name="Yashiro I."/>
            <person name="Jinno K."/>
            <person name="Aoki N."/>
            <person name="Tsuruyama A."/>
            <person name="Okamura Y."/>
            <person name="Tanikawa S."/>
            <person name="Fujita N."/>
            <person name="Takeyama H."/>
            <person name="Matsunaga T."/>
        </authorList>
    </citation>
    <scope>NUCLEOTIDE SEQUENCE [LARGE SCALE GENOMIC DNA]</scope>
    <source>
        <strain>ATCC 700980 / DSM 13731 / RS-1</strain>
    </source>
</reference>